<keyword id="KW-1003">Cell membrane</keyword>
<keyword id="KW-0472">Membrane</keyword>
<keyword id="KW-0677">Repeat</keyword>
<keyword id="KW-0812">Transmembrane</keyword>
<keyword id="KW-1133">Transmembrane helix</keyword>
<keyword id="KW-0813">Transport</keyword>
<evidence type="ECO:0000255" key="1">
    <source>
        <dbReference type="HAMAP-Rule" id="MF_01015"/>
    </source>
</evidence>
<dbReference type="EMBL" id="AE016795">
    <property type="protein sequence ID" value="AAO11165.2"/>
    <property type="molecule type" value="Genomic_DNA"/>
</dbReference>
<dbReference type="RefSeq" id="WP_011080657.1">
    <property type="nucleotide sequence ID" value="NC_004459.3"/>
</dbReference>
<dbReference type="SMR" id="Q8D8Y7"/>
<dbReference type="KEGG" id="vvu:VV1_2828"/>
<dbReference type="HOGENOM" id="CLU_035023_2_2_6"/>
<dbReference type="Proteomes" id="UP000002275">
    <property type="component" value="Chromosome 1"/>
</dbReference>
<dbReference type="GO" id="GO:0005886">
    <property type="term" value="C:plasma membrane"/>
    <property type="evidence" value="ECO:0007669"/>
    <property type="project" value="UniProtKB-SubCell"/>
</dbReference>
<dbReference type="GO" id="GO:0008324">
    <property type="term" value="F:monoatomic cation transmembrane transporter activity"/>
    <property type="evidence" value="ECO:0007669"/>
    <property type="project" value="InterPro"/>
</dbReference>
<dbReference type="GO" id="GO:0006813">
    <property type="term" value="P:potassium ion transport"/>
    <property type="evidence" value="ECO:0007669"/>
    <property type="project" value="InterPro"/>
</dbReference>
<dbReference type="Gene3D" id="3.30.70.1450">
    <property type="entry name" value="Regulator of K+ conductance, C-terminal domain"/>
    <property type="match status" value="2"/>
</dbReference>
<dbReference type="HAMAP" id="MF_01015">
    <property type="entry name" value="YbjL"/>
    <property type="match status" value="1"/>
</dbReference>
<dbReference type="InterPro" id="IPR050144">
    <property type="entry name" value="AAE_transporter"/>
</dbReference>
<dbReference type="InterPro" id="IPR006037">
    <property type="entry name" value="RCK_C"/>
</dbReference>
<dbReference type="InterPro" id="IPR036721">
    <property type="entry name" value="RCK_C_sf"/>
</dbReference>
<dbReference type="InterPro" id="IPR023017">
    <property type="entry name" value="Transp_YbjL_put"/>
</dbReference>
<dbReference type="InterPro" id="IPR006512">
    <property type="entry name" value="YidE_YbjL"/>
</dbReference>
<dbReference type="NCBIfam" id="NF003440">
    <property type="entry name" value="PRK04972.1"/>
    <property type="match status" value="1"/>
</dbReference>
<dbReference type="NCBIfam" id="TIGR01625">
    <property type="entry name" value="YidE_YbjL_dupl"/>
    <property type="match status" value="2"/>
</dbReference>
<dbReference type="PANTHER" id="PTHR30445">
    <property type="entry name" value="K(+)_H(+) ANTIPORTER SUBUNIT KHTT"/>
    <property type="match status" value="1"/>
</dbReference>
<dbReference type="PANTHER" id="PTHR30445:SF10">
    <property type="entry name" value="TRANSPORT PROTEIN YBJL-RELATED"/>
    <property type="match status" value="1"/>
</dbReference>
<dbReference type="Pfam" id="PF06826">
    <property type="entry name" value="Asp-Al_Ex"/>
    <property type="match status" value="2"/>
</dbReference>
<dbReference type="Pfam" id="PF02080">
    <property type="entry name" value="TrkA_C"/>
    <property type="match status" value="2"/>
</dbReference>
<dbReference type="SUPFAM" id="SSF116726">
    <property type="entry name" value="TrkA C-terminal domain-like"/>
    <property type="match status" value="2"/>
</dbReference>
<dbReference type="PROSITE" id="PS51202">
    <property type="entry name" value="RCK_C"/>
    <property type="match status" value="2"/>
</dbReference>
<protein>
    <recommendedName>
        <fullName evidence="1">Putative transport protein VV1_2828</fullName>
    </recommendedName>
</protein>
<name>Y2828_VIBVU</name>
<accession>Q8D8Y7</accession>
<feature type="chain" id="PRO_0000208793" description="Putative transport protein VV1_2828">
    <location>
        <begin position="1"/>
        <end position="560"/>
    </location>
</feature>
<feature type="transmembrane region" description="Helical" evidence="1">
    <location>
        <begin position="5"/>
        <end position="25"/>
    </location>
</feature>
<feature type="transmembrane region" description="Helical" evidence="1">
    <location>
        <begin position="37"/>
        <end position="57"/>
    </location>
</feature>
<feature type="transmembrane region" description="Helical" evidence="1">
    <location>
        <begin position="66"/>
        <end position="86"/>
    </location>
</feature>
<feature type="transmembrane region" description="Helical" evidence="1">
    <location>
        <begin position="91"/>
        <end position="111"/>
    </location>
</feature>
<feature type="transmembrane region" description="Helical" evidence="1">
    <location>
        <begin position="164"/>
        <end position="184"/>
    </location>
</feature>
<feature type="transmembrane region" description="Helical" evidence="1">
    <location>
        <begin position="386"/>
        <end position="406"/>
    </location>
</feature>
<feature type="transmembrane region" description="Helical" evidence="1">
    <location>
        <begin position="409"/>
        <end position="429"/>
    </location>
</feature>
<feature type="transmembrane region" description="Helical" evidence="1">
    <location>
        <begin position="443"/>
        <end position="463"/>
    </location>
</feature>
<feature type="transmembrane region" description="Helical" evidence="1">
    <location>
        <begin position="478"/>
        <end position="498"/>
    </location>
</feature>
<feature type="transmembrane region" description="Helical" evidence="1">
    <location>
        <begin position="506"/>
        <end position="526"/>
    </location>
</feature>
<feature type="transmembrane region" description="Helical" evidence="1">
    <location>
        <begin position="539"/>
        <end position="559"/>
    </location>
</feature>
<feature type="domain" description="RCK C-terminal 1" evidence="1">
    <location>
        <begin position="203"/>
        <end position="292"/>
    </location>
</feature>
<feature type="domain" description="RCK C-terminal 2" evidence="1">
    <location>
        <begin position="293"/>
        <end position="376"/>
    </location>
</feature>
<reference key="1">
    <citation type="submission" date="2002-12" db="EMBL/GenBank/DDBJ databases">
        <title>Complete genome sequence of Vibrio vulnificus CMCP6.</title>
        <authorList>
            <person name="Rhee J.H."/>
            <person name="Kim S.Y."/>
            <person name="Chung S.S."/>
            <person name="Kim J.J."/>
            <person name="Moon Y.H."/>
            <person name="Jeong H."/>
            <person name="Choy H.E."/>
        </authorList>
    </citation>
    <scope>NUCLEOTIDE SEQUENCE [LARGE SCALE GENOMIC DNA]</scope>
    <source>
        <strain>CMCP6</strain>
    </source>
</reference>
<sequence>MNIDVVLLLQQNPILLIFVVLAIGLAFGKVRIANMQLGNSIGVLITSLIMGHLGFSFNAEALTIGFMLFIYCVGIEAGPNFFGIFFRDGKHYFTLSMVVLVTAVSISYFASHYMGLDFGLSAGMMAGALTATPVLVGAQDALNSGLATIPRNMEFSLVLENLSVGYAMAYLVGLISMIMFAKLLPRLQKQNLSDSAQQIAQERGLGGSGQRKVYLPIIRAYRVGPELINWTDGKNLRELGIYRQTGCYIERIRRHGILAHPDGDAILQEGDEIALVGFPDSHARLDPSFRNGKEVFDRNLLDLRIVEEEIVVKSDAIAGKRLSDLNLSEYGCFLNRVIRAQIEMPMDLDIVLAKGDILQVSGEKSRVHGLAERIGFISIHSQIADLLAFCSFFILGIMFGLVTMTFGQVSFSLGNAVGLLLSGITLGFLRANHPTFGYVPQGALNMVKDLGLMIFMVGIGLSAGGKMFEHLTQVGPQIIGIAFLVSVVPVFFAYLVGAYVLKMNRALLFGAIIGARTCAPAMDIVNEYAKSTIPALGYAGTYAIANILMTLAGTILIILS</sequence>
<comment type="subcellular location">
    <subcellularLocation>
        <location evidence="1">Cell membrane</location>
        <topology evidence="1">Multi-pass membrane protein</topology>
    </subcellularLocation>
</comment>
<comment type="similarity">
    <text evidence="1">Belongs to the AAE transporter (TC 2.A.81) family. YbjL subfamily.</text>
</comment>
<organism>
    <name type="scientific">Vibrio vulnificus (strain CMCP6)</name>
    <dbReference type="NCBI Taxonomy" id="216895"/>
    <lineage>
        <taxon>Bacteria</taxon>
        <taxon>Pseudomonadati</taxon>
        <taxon>Pseudomonadota</taxon>
        <taxon>Gammaproteobacteria</taxon>
        <taxon>Vibrionales</taxon>
        <taxon>Vibrionaceae</taxon>
        <taxon>Vibrio</taxon>
    </lineage>
</organism>
<gene>
    <name type="ordered locus">VV1_2828</name>
</gene>
<proteinExistence type="inferred from homology"/>